<dbReference type="EMBL" id="BX572602">
    <property type="protein sequence ID" value="CAE28443.1"/>
    <property type="molecule type" value="Genomic_DNA"/>
</dbReference>
<dbReference type="RefSeq" id="WP_011158550.1">
    <property type="nucleotide sequence ID" value="NZ_CP116810.1"/>
</dbReference>
<dbReference type="SMR" id="Q6N5H2"/>
<dbReference type="STRING" id="258594.RPA3002"/>
<dbReference type="GeneID" id="66894087"/>
<dbReference type="eggNOG" id="COG2156">
    <property type="taxonomic scope" value="Bacteria"/>
</dbReference>
<dbReference type="HOGENOM" id="CLU_077094_2_0_5"/>
<dbReference type="PhylomeDB" id="Q6N5H2"/>
<dbReference type="GO" id="GO:0005886">
    <property type="term" value="C:plasma membrane"/>
    <property type="evidence" value="ECO:0007669"/>
    <property type="project" value="UniProtKB-SubCell"/>
</dbReference>
<dbReference type="GO" id="GO:0005524">
    <property type="term" value="F:ATP binding"/>
    <property type="evidence" value="ECO:0007669"/>
    <property type="project" value="UniProtKB-UniRule"/>
</dbReference>
<dbReference type="GO" id="GO:0008556">
    <property type="term" value="F:P-type potassium transmembrane transporter activity"/>
    <property type="evidence" value="ECO:0007669"/>
    <property type="project" value="InterPro"/>
</dbReference>
<dbReference type="HAMAP" id="MF_00276">
    <property type="entry name" value="KdpC"/>
    <property type="match status" value="1"/>
</dbReference>
<dbReference type="InterPro" id="IPR003820">
    <property type="entry name" value="KdpC"/>
</dbReference>
<dbReference type="NCBIfam" id="TIGR00681">
    <property type="entry name" value="kdpC"/>
    <property type="match status" value="1"/>
</dbReference>
<dbReference type="NCBIfam" id="NF001454">
    <property type="entry name" value="PRK00315.1"/>
    <property type="match status" value="1"/>
</dbReference>
<dbReference type="NCBIfam" id="NF010603">
    <property type="entry name" value="PRK13999.1"/>
    <property type="match status" value="1"/>
</dbReference>
<dbReference type="PANTHER" id="PTHR30042">
    <property type="entry name" value="POTASSIUM-TRANSPORTING ATPASE C CHAIN"/>
    <property type="match status" value="1"/>
</dbReference>
<dbReference type="PANTHER" id="PTHR30042:SF2">
    <property type="entry name" value="POTASSIUM-TRANSPORTING ATPASE KDPC SUBUNIT"/>
    <property type="match status" value="1"/>
</dbReference>
<dbReference type="Pfam" id="PF02669">
    <property type="entry name" value="KdpC"/>
    <property type="match status" value="1"/>
</dbReference>
<dbReference type="PIRSF" id="PIRSF001296">
    <property type="entry name" value="K_ATPase_KdpC"/>
    <property type="match status" value="1"/>
</dbReference>
<keyword id="KW-0067">ATP-binding</keyword>
<keyword id="KW-0997">Cell inner membrane</keyword>
<keyword id="KW-1003">Cell membrane</keyword>
<keyword id="KW-0406">Ion transport</keyword>
<keyword id="KW-0472">Membrane</keyword>
<keyword id="KW-0547">Nucleotide-binding</keyword>
<keyword id="KW-0630">Potassium</keyword>
<keyword id="KW-0633">Potassium transport</keyword>
<keyword id="KW-0812">Transmembrane</keyword>
<keyword id="KW-1133">Transmembrane helix</keyword>
<keyword id="KW-0813">Transport</keyword>
<evidence type="ECO:0000255" key="1">
    <source>
        <dbReference type="HAMAP-Rule" id="MF_00276"/>
    </source>
</evidence>
<evidence type="ECO:0000256" key="2">
    <source>
        <dbReference type="SAM" id="MobiDB-lite"/>
    </source>
</evidence>
<feature type="chain" id="PRO_1000022306" description="Potassium-transporting ATPase KdpC subunit">
    <location>
        <begin position="1"/>
        <end position="201"/>
    </location>
</feature>
<feature type="transmembrane region" description="Helical" evidence="1">
    <location>
        <begin position="12"/>
        <end position="34"/>
    </location>
</feature>
<feature type="region of interest" description="Disordered" evidence="2">
    <location>
        <begin position="73"/>
        <end position="102"/>
    </location>
</feature>
<feature type="compositionally biased region" description="Polar residues" evidence="2">
    <location>
        <begin position="81"/>
        <end position="101"/>
    </location>
</feature>
<name>KDPC_RHOPA</name>
<reference key="1">
    <citation type="journal article" date="2004" name="Nat. Biotechnol.">
        <title>Complete genome sequence of the metabolically versatile photosynthetic bacterium Rhodopseudomonas palustris.</title>
        <authorList>
            <person name="Larimer F.W."/>
            <person name="Chain P."/>
            <person name="Hauser L."/>
            <person name="Lamerdin J.E."/>
            <person name="Malfatti S."/>
            <person name="Do L."/>
            <person name="Land M.L."/>
            <person name="Pelletier D.A."/>
            <person name="Beatty J.T."/>
            <person name="Lang A.S."/>
            <person name="Tabita F.R."/>
            <person name="Gibson J.L."/>
            <person name="Hanson T.E."/>
            <person name="Bobst C."/>
            <person name="Torres y Torres J.L."/>
            <person name="Peres C."/>
            <person name="Harrison F.H."/>
            <person name="Gibson J."/>
            <person name="Harwood C.S."/>
        </authorList>
    </citation>
    <scope>NUCLEOTIDE SEQUENCE [LARGE SCALE GENOMIC DNA]</scope>
    <source>
        <strain>ATCC BAA-98 / CGA009</strain>
    </source>
</reference>
<protein>
    <recommendedName>
        <fullName evidence="1">Potassium-transporting ATPase KdpC subunit</fullName>
    </recommendedName>
    <alternativeName>
        <fullName evidence="1">ATP phosphohydrolase [potassium-transporting] C chain</fullName>
    </alternativeName>
    <alternativeName>
        <fullName evidence="1">Potassium-binding and translocating subunit C</fullName>
    </alternativeName>
    <alternativeName>
        <fullName evidence="1">Potassium-translocating ATPase C chain</fullName>
    </alternativeName>
</protein>
<organism>
    <name type="scientific">Rhodopseudomonas palustris (strain ATCC BAA-98 / CGA009)</name>
    <dbReference type="NCBI Taxonomy" id="258594"/>
    <lineage>
        <taxon>Bacteria</taxon>
        <taxon>Pseudomonadati</taxon>
        <taxon>Pseudomonadota</taxon>
        <taxon>Alphaproteobacteria</taxon>
        <taxon>Hyphomicrobiales</taxon>
        <taxon>Nitrobacteraceae</taxon>
        <taxon>Rhodopseudomonas</taxon>
    </lineage>
</organism>
<accession>Q6N5H2</accession>
<comment type="function">
    <text evidence="1">Part of the high-affinity ATP-driven potassium transport (or Kdp) system, which catalyzes the hydrolysis of ATP coupled with the electrogenic transport of potassium into the cytoplasm. This subunit acts as a catalytic chaperone that increases the ATP-binding affinity of the ATP-hydrolyzing subunit KdpB by the formation of a transient KdpB/KdpC/ATP ternary complex.</text>
</comment>
<comment type="subunit">
    <text evidence="1">The system is composed of three essential subunits: KdpA, KdpB and KdpC.</text>
</comment>
<comment type="subcellular location">
    <subcellularLocation>
        <location evidence="1">Cell inner membrane</location>
        <topology evidence="1">Single-pass membrane protein</topology>
    </subcellularLocation>
</comment>
<comment type="similarity">
    <text evidence="1">Belongs to the KdpC family.</text>
</comment>
<sequence length="201" mass="20617">MLKEVRPAVVSLLALTMITGLAYPLAVTGLATVLFPYQAQGSLVERGGKVVGSALIGQEFKGDEYFHGRPSATVAPDPADSSKTVSAPYNAANSGGSNLGPTSKALADRLSEDVAKLKAENPAAAIPVDLVTTSGSGLDPDISPEGALFQVPRVAKARGVPEEQIRKLVGASINQPLGGVLGEPRVNVLKLNLALDAAAPR</sequence>
<proteinExistence type="inferred from homology"/>
<gene>
    <name evidence="1" type="primary">kdpC</name>
    <name type="ordered locus">RPA3002</name>
</gene>